<proteinExistence type="inferred from homology"/>
<name>NBP35_COCIM</name>
<evidence type="ECO:0000255" key="1">
    <source>
        <dbReference type="HAMAP-Rule" id="MF_03038"/>
    </source>
</evidence>
<evidence type="ECO:0000256" key="2">
    <source>
        <dbReference type="SAM" id="MobiDB-lite"/>
    </source>
</evidence>
<sequence length="342" mass="36403">MAPSFEEPTVALGAASKAAPKLVAPEPEHCPGPESEQAGKGDACAGCPNQSICASAPKGPDPDIPIITARLSSIRHKILVLSGKGGVGKSTFTSLLANAFASNPDSTVGVMDTDICGPSIPKMMDVETETIHVSNAGWNPVWVSDNLAVMSVQFMLPNRDDAVIWRGPKKNGLIKQFLKDVEWGELDYLIVDTPPGTSDEHLSVNSFLKESGVDGAVLVTTPQEVSLLDVRKEIDFCRKAGIRILGLVENMSGFVCPKCTHESQIFKPTTGGGGRLAADMGIPFLGSVPLDPRVGMACDYGENFMDRYPESPASMALRKVVRTISRQVGEDPDEVLPETDAV</sequence>
<protein>
    <recommendedName>
        <fullName evidence="1">Cytosolic Fe-S cluster assembly factor NBP35</fullName>
    </recommendedName>
    <alternativeName>
        <fullName evidence="1">Nucleotide-binding protein 35</fullName>
    </alternativeName>
</protein>
<gene>
    <name evidence="1" type="primary">NBP35</name>
    <name type="ORF">CIMG_00315</name>
</gene>
<reference key="1">
    <citation type="journal article" date="2009" name="Genome Res.">
        <title>Comparative genomic analyses of the human fungal pathogens Coccidioides and their relatives.</title>
        <authorList>
            <person name="Sharpton T.J."/>
            <person name="Stajich J.E."/>
            <person name="Rounsley S.D."/>
            <person name="Gardner M.J."/>
            <person name="Wortman J.R."/>
            <person name="Jordar V.S."/>
            <person name="Maiti R."/>
            <person name="Kodira C.D."/>
            <person name="Neafsey D.E."/>
            <person name="Zeng Q."/>
            <person name="Hung C.-Y."/>
            <person name="McMahan C."/>
            <person name="Muszewska A."/>
            <person name="Grynberg M."/>
            <person name="Mandel M.A."/>
            <person name="Kellner E.M."/>
            <person name="Barker B.M."/>
            <person name="Galgiani J.N."/>
            <person name="Orbach M.J."/>
            <person name="Kirkland T.N."/>
            <person name="Cole G.T."/>
            <person name="Henn M.R."/>
            <person name="Birren B.W."/>
            <person name="Taylor J.W."/>
        </authorList>
    </citation>
    <scope>NUCLEOTIDE SEQUENCE [LARGE SCALE GENOMIC DNA]</scope>
    <source>
        <strain>RS</strain>
    </source>
</reference>
<reference key="2">
    <citation type="journal article" date="2010" name="Genome Res.">
        <title>Population genomic sequencing of Coccidioides fungi reveals recent hybridization and transposon control.</title>
        <authorList>
            <person name="Neafsey D.E."/>
            <person name="Barker B.M."/>
            <person name="Sharpton T.J."/>
            <person name="Stajich J.E."/>
            <person name="Park D.J."/>
            <person name="Whiston E."/>
            <person name="Hung C.-Y."/>
            <person name="McMahan C."/>
            <person name="White J."/>
            <person name="Sykes S."/>
            <person name="Heiman D."/>
            <person name="Young S."/>
            <person name="Zeng Q."/>
            <person name="Abouelleil A."/>
            <person name="Aftuck L."/>
            <person name="Bessette D."/>
            <person name="Brown A."/>
            <person name="FitzGerald M."/>
            <person name="Lui A."/>
            <person name="Macdonald J.P."/>
            <person name="Priest M."/>
            <person name="Orbach M.J."/>
            <person name="Galgiani J.N."/>
            <person name="Kirkland T.N."/>
            <person name="Cole G.T."/>
            <person name="Birren B.W."/>
            <person name="Henn M.R."/>
            <person name="Taylor J.W."/>
            <person name="Rounsley S.D."/>
        </authorList>
    </citation>
    <scope>GENOME REANNOTATION</scope>
    <source>
        <strain>RS</strain>
    </source>
</reference>
<dbReference type="EMBL" id="GG704911">
    <property type="protein sequence ID" value="EAS34961.1"/>
    <property type="molecule type" value="Genomic_DNA"/>
</dbReference>
<dbReference type="RefSeq" id="XP_001246544.1">
    <property type="nucleotide sequence ID" value="XM_001246543.2"/>
</dbReference>
<dbReference type="SMR" id="Q1EAU8"/>
<dbReference type="FunCoup" id="Q1EAU8">
    <property type="interactions" value="563"/>
</dbReference>
<dbReference type="STRING" id="246410.Q1EAU8"/>
<dbReference type="GeneID" id="4565239"/>
<dbReference type="KEGG" id="cim:CIMG_00315"/>
<dbReference type="VEuPathDB" id="FungiDB:CIMG_00315"/>
<dbReference type="InParanoid" id="Q1EAU8"/>
<dbReference type="OMA" id="VSGCPMR"/>
<dbReference type="OrthoDB" id="1741334at2759"/>
<dbReference type="Proteomes" id="UP000001261">
    <property type="component" value="Unassembled WGS sequence"/>
</dbReference>
<dbReference type="GO" id="GO:0005829">
    <property type="term" value="C:cytosol"/>
    <property type="evidence" value="ECO:0007669"/>
    <property type="project" value="TreeGrafter"/>
</dbReference>
<dbReference type="GO" id="GO:0051539">
    <property type="term" value="F:4 iron, 4 sulfur cluster binding"/>
    <property type="evidence" value="ECO:0007669"/>
    <property type="project" value="UniProtKB-UniRule"/>
</dbReference>
<dbReference type="GO" id="GO:0005524">
    <property type="term" value="F:ATP binding"/>
    <property type="evidence" value="ECO:0007669"/>
    <property type="project" value="UniProtKB-KW"/>
</dbReference>
<dbReference type="GO" id="GO:0140663">
    <property type="term" value="F:ATP-dependent FeS chaperone activity"/>
    <property type="evidence" value="ECO:0007669"/>
    <property type="project" value="InterPro"/>
</dbReference>
<dbReference type="GO" id="GO:0046872">
    <property type="term" value="F:metal ion binding"/>
    <property type="evidence" value="ECO:0007669"/>
    <property type="project" value="UniProtKB-KW"/>
</dbReference>
<dbReference type="GO" id="GO:0016226">
    <property type="term" value="P:iron-sulfur cluster assembly"/>
    <property type="evidence" value="ECO:0007669"/>
    <property type="project" value="UniProtKB-UniRule"/>
</dbReference>
<dbReference type="CDD" id="cd02037">
    <property type="entry name" value="Mrp_NBP35"/>
    <property type="match status" value="1"/>
</dbReference>
<dbReference type="FunFam" id="3.40.50.300:FF:000427">
    <property type="entry name" value="Cytosolic Fe-S cluster assembly factor NUBP1"/>
    <property type="match status" value="1"/>
</dbReference>
<dbReference type="Gene3D" id="3.40.50.300">
    <property type="entry name" value="P-loop containing nucleotide triphosphate hydrolases"/>
    <property type="match status" value="1"/>
</dbReference>
<dbReference type="HAMAP" id="MF_02040">
    <property type="entry name" value="Mrp_NBP35"/>
    <property type="match status" value="1"/>
</dbReference>
<dbReference type="HAMAP" id="MF_03038">
    <property type="entry name" value="NUBP1"/>
    <property type="match status" value="1"/>
</dbReference>
<dbReference type="InterPro" id="IPR000808">
    <property type="entry name" value="Mrp-like_CS"/>
</dbReference>
<dbReference type="InterPro" id="IPR019591">
    <property type="entry name" value="Mrp/NBP35_ATP-bd"/>
</dbReference>
<dbReference type="InterPro" id="IPR028601">
    <property type="entry name" value="NUBP1/Nbp35"/>
</dbReference>
<dbReference type="InterPro" id="IPR027417">
    <property type="entry name" value="P-loop_NTPase"/>
</dbReference>
<dbReference type="InterPro" id="IPR033756">
    <property type="entry name" value="YlxH/NBP35"/>
</dbReference>
<dbReference type="PANTHER" id="PTHR23264:SF35">
    <property type="entry name" value="CYTOSOLIC FE-S CLUSTER ASSEMBLY FACTOR NUBP1"/>
    <property type="match status" value="1"/>
</dbReference>
<dbReference type="PANTHER" id="PTHR23264">
    <property type="entry name" value="NUCLEOTIDE-BINDING PROTEIN NBP35 YEAST -RELATED"/>
    <property type="match status" value="1"/>
</dbReference>
<dbReference type="Pfam" id="PF10609">
    <property type="entry name" value="ParA"/>
    <property type="match status" value="1"/>
</dbReference>
<dbReference type="SUPFAM" id="SSF52540">
    <property type="entry name" value="P-loop containing nucleoside triphosphate hydrolases"/>
    <property type="match status" value="1"/>
</dbReference>
<dbReference type="PROSITE" id="PS01215">
    <property type="entry name" value="MRP"/>
    <property type="match status" value="1"/>
</dbReference>
<accession>Q1EAU8</accession>
<accession>J3KGR0</accession>
<organism>
    <name type="scientific">Coccidioides immitis (strain RS)</name>
    <name type="common">Valley fever fungus</name>
    <dbReference type="NCBI Taxonomy" id="246410"/>
    <lineage>
        <taxon>Eukaryota</taxon>
        <taxon>Fungi</taxon>
        <taxon>Dikarya</taxon>
        <taxon>Ascomycota</taxon>
        <taxon>Pezizomycotina</taxon>
        <taxon>Eurotiomycetes</taxon>
        <taxon>Eurotiomycetidae</taxon>
        <taxon>Onygenales</taxon>
        <taxon>Onygenaceae</taxon>
        <taxon>Coccidioides</taxon>
    </lineage>
</organism>
<feature type="chain" id="PRO_0000278894" description="Cytosolic Fe-S cluster assembly factor NBP35">
    <location>
        <begin position="1"/>
        <end position="342"/>
    </location>
</feature>
<feature type="region of interest" description="Disordered" evidence="2">
    <location>
        <begin position="16"/>
        <end position="42"/>
    </location>
</feature>
<feature type="binding site" evidence="1">
    <location>
        <position position="30"/>
    </location>
    <ligand>
        <name>[4Fe-4S] cluster</name>
        <dbReference type="ChEBI" id="CHEBI:49883"/>
        <label>1</label>
    </ligand>
</feature>
<feature type="binding site" evidence="1">
    <location>
        <position position="44"/>
    </location>
    <ligand>
        <name>[4Fe-4S] cluster</name>
        <dbReference type="ChEBI" id="CHEBI:49883"/>
        <label>1</label>
    </ligand>
</feature>
<feature type="binding site" evidence="1">
    <location>
        <position position="47"/>
    </location>
    <ligand>
        <name>[4Fe-4S] cluster</name>
        <dbReference type="ChEBI" id="CHEBI:49883"/>
        <label>1</label>
    </ligand>
</feature>
<feature type="binding site" evidence="1">
    <location>
        <position position="53"/>
    </location>
    <ligand>
        <name>[4Fe-4S] cluster</name>
        <dbReference type="ChEBI" id="CHEBI:49883"/>
        <label>1</label>
    </ligand>
</feature>
<feature type="binding site" evidence="1">
    <location>
        <begin position="83"/>
        <end position="90"/>
    </location>
    <ligand>
        <name>ATP</name>
        <dbReference type="ChEBI" id="CHEBI:30616"/>
    </ligand>
</feature>
<feature type="binding site" evidence="1">
    <location>
        <position position="256"/>
    </location>
    <ligand>
        <name>[4Fe-4S] cluster</name>
        <dbReference type="ChEBI" id="CHEBI:49883"/>
        <label>2</label>
        <note>ligand shared with heterodimeric partner</note>
    </ligand>
</feature>
<feature type="binding site" evidence="1">
    <location>
        <position position="259"/>
    </location>
    <ligand>
        <name>[4Fe-4S] cluster</name>
        <dbReference type="ChEBI" id="CHEBI:49883"/>
        <label>2</label>
        <note>ligand shared with heterodimeric partner</note>
    </ligand>
</feature>
<comment type="function">
    <text evidence="1">Component of the cytosolic iron-sulfur (Fe/S) protein assembly (CIA) machinery. Required for maturation of extramitochondrial Fe-S proteins. The NBP35-CFD1 heterotetramer forms a Fe-S scaffold complex, mediating the de novo assembly of an Fe-S cluster and its transfer to target apoproteins.</text>
</comment>
<comment type="cofactor">
    <cofactor evidence="1">
        <name>[4Fe-4S] cluster</name>
        <dbReference type="ChEBI" id="CHEBI:49883"/>
    </cofactor>
    <text evidence="1">Binds 4 [4Fe-4S] clusters per heterotetramer. Contains two stable clusters in the N-termini of NBP35 and two labile, bridging clusters between subunits of the NBP35-CFD1 heterotetramer.</text>
</comment>
<comment type="subunit">
    <text evidence="1">Heterotetramer of 2 NBP35 and 2 CFD1 chains.</text>
</comment>
<comment type="subcellular location">
    <subcellularLocation>
        <location evidence="1">Cytoplasm</location>
    </subcellularLocation>
</comment>
<comment type="similarity">
    <text evidence="1">Belongs to the Mrp/NBP35 ATP-binding proteins family. NUBP1/NBP35 subfamily.</text>
</comment>
<keyword id="KW-0004">4Fe-4S</keyword>
<keyword id="KW-0067">ATP-binding</keyword>
<keyword id="KW-0963">Cytoplasm</keyword>
<keyword id="KW-0408">Iron</keyword>
<keyword id="KW-0411">Iron-sulfur</keyword>
<keyword id="KW-0479">Metal-binding</keyword>
<keyword id="KW-0547">Nucleotide-binding</keyword>
<keyword id="KW-1185">Reference proteome</keyword>